<gene>
    <name evidence="1" type="primary">rplL</name>
    <name type="ordered locus">Pmen_3917</name>
</gene>
<protein>
    <recommendedName>
        <fullName evidence="1">Large ribosomal subunit protein bL12</fullName>
    </recommendedName>
    <alternativeName>
        <fullName evidence="2">50S ribosomal protein L7/L12</fullName>
    </alternativeName>
</protein>
<organism>
    <name type="scientific">Ectopseudomonas mendocina (strain ymp)</name>
    <name type="common">Pseudomonas mendocina</name>
    <dbReference type="NCBI Taxonomy" id="399739"/>
    <lineage>
        <taxon>Bacteria</taxon>
        <taxon>Pseudomonadati</taxon>
        <taxon>Pseudomonadota</taxon>
        <taxon>Gammaproteobacteria</taxon>
        <taxon>Pseudomonadales</taxon>
        <taxon>Pseudomonadaceae</taxon>
        <taxon>Ectopseudomonas</taxon>
    </lineage>
</organism>
<evidence type="ECO:0000255" key="1">
    <source>
        <dbReference type="HAMAP-Rule" id="MF_00368"/>
    </source>
</evidence>
<evidence type="ECO:0000305" key="2"/>
<dbReference type="EMBL" id="CP000680">
    <property type="protein sequence ID" value="ABP86664.1"/>
    <property type="molecule type" value="Genomic_DNA"/>
</dbReference>
<dbReference type="SMR" id="A4XZ98"/>
<dbReference type="STRING" id="399739.Pmen_3917"/>
<dbReference type="KEGG" id="pmy:Pmen_3917"/>
<dbReference type="PATRIC" id="fig|399739.8.peg.3970"/>
<dbReference type="eggNOG" id="COG0222">
    <property type="taxonomic scope" value="Bacteria"/>
</dbReference>
<dbReference type="HOGENOM" id="CLU_086499_3_2_6"/>
<dbReference type="OrthoDB" id="9811748at2"/>
<dbReference type="GO" id="GO:0022625">
    <property type="term" value="C:cytosolic large ribosomal subunit"/>
    <property type="evidence" value="ECO:0007669"/>
    <property type="project" value="TreeGrafter"/>
</dbReference>
<dbReference type="GO" id="GO:0003729">
    <property type="term" value="F:mRNA binding"/>
    <property type="evidence" value="ECO:0007669"/>
    <property type="project" value="TreeGrafter"/>
</dbReference>
<dbReference type="GO" id="GO:0003735">
    <property type="term" value="F:structural constituent of ribosome"/>
    <property type="evidence" value="ECO:0007669"/>
    <property type="project" value="InterPro"/>
</dbReference>
<dbReference type="GO" id="GO:0006412">
    <property type="term" value="P:translation"/>
    <property type="evidence" value="ECO:0007669"/>
    <property type="project" value="UniProtKB-UniRule"/>
</dbReference>
<dbReference type="CDD" id="cd00387">
    <property type="entry name" value="Ribosomal_L7_L12"/>
    <property type="match status" value="1"/>
</dbReference>
<dbReference type="FunFam" id="1.20.5.710:FF:000003">
    <property type="entry name" value="50S ribosomal protein L7/L12"/>
    <property type="match status" value="1"/>
</dbReference>
<dbReference type="FunFam" id="3.30.1390.10:FF:000001">
    <property type="entry name" value="50S ribosomal protein L7/L12"/>
    <property type="match status" value="1"/>
</dbReference>
<dbReference type="Gene3D" id="3.30.1390.10">
    <property type="match status" value="1"/>
</dbReference>
<dbReference type="Gene3D" id="1.20.5.710">
    <property type="entry name" value="Single helix bin"/>
    <property type="match status" value="1"/>
</dbReference>
<dbReference type="HAMAP" id="MF_00368">
    <property type="entry name" value="Ribosomal_bL12"/>
    <property type="match status" value="1"/>
</dbReference>
<dbReference type="InterPro" id="IPR000206">
    <property type="entry name" value="Ribosomal_bL12"/>
</dbReference>
<dbReference type="InterPro" id="IPR013823">
    <property type="entry name" value="Ribosomal_bL12_C"/>
</dbReference>
<dbReference type="InterPro" id="IPR014719">
    <property type="entry name" value="Ribosomal_bL12_C/ClpS-like"/>
</dbReference>
<dbReference type="InterPro" id="IPR008932">
    <property type="entry name" value="Ribosomal_bL12_oligo"/>
</dbReference>
<dbReference type="InterPro" id="IPR036235">
    <property type="entry name" value="Ribosomal_bL12_oligo_N_sf"/>
</dbReference>
<dbReference type="NCBIfam" id="TIGR00855">
    <property type="entry name" value="L12"/>
    <property type="match status" value="1"/>
</dbReference>
<dbReference type="PANTHER" id="PTHR45987">
    <property type="entry name" value="39S RIBOSOMAL PROTEIN L12"/>
    <property type="match status" value="1"/>
</dbReference>
<dbReference type="PANTHER" id="PTHR45987:SF4">
    <property type="entry name" value="LARGE RIBOSOMAL SUBUNIT PROTEIN BL12M"/>
    <property type="match status" value="1"/>
</dbReference>
<dbReference type="Pfam" id="PF00542">
    <property type="entry name" value="Ribosomal_L12"/>
    <property type="match status" value="1"/>
</dbReference>
<dbReference type="Pfam" id="PF16320">
    <property type="entry name" value="Ribosomal_L12_N"/>
    <property type="match status" value="1"/>
</dbReference>
<dbReference type="SUPFAM" id="SSF54736">
    <property type="entry name" value="ClpS-like"/>
    <property type="match status" value="1"/>
</dbReference>
<dbReference type="SUPFAM" id="SSF48300">
    <property type="entry name" value="Ribosomal protein L7/12, oligomerisation (N-terminal) domain"/>
    <property type="match status" value="1"/>
</dbReference>
<reference key="1">
    <citation type="submission" date="2007-04" db="EMBL/GenBank/DDBJ databases">
        <title>Complete sequence of Pseudomonas mendocina ymp.</title>
        <authorList>
            <consortium name="US DOE Joint Genome Institute"/>
            <person name="Copeland A."/>
            <person name="Lucas S."/>
            <person name="Lapidus A."/>
            <person name="Barry K."/>
            <person name="Glavina del Rio T."/>
            <person name="Dalin E."/>
            <person name="Tice H."/>
            <person name="Pitluck S."/>
            <person name="Kiss H."/>
            <person name="Brettin T."/>
            <person name="Detter J.C."/>
            <person name="Bruce D."/>
            <person name="Han C."/>
            <person name="Schmutz J."/>
            <person name="Larimer F."/>
            <person name="Land M."/>
            <person name="Hauser L."/>
            <person name="Kyrpides N."/>
            <person name="Mikhailova N."/>
            <person name="Hersman L."/>
            <person name="Dubois J."/>
            <person name="Maurice P."/>
            <person name="Richardson P."/>
        </authorList>
    </citation>
    <scope>NUCLEOTIDE SEQUENCE [LARGE SCALE GENOMIC DNA]</scope>
    <source>
        <strain>ymp</strain>
    </source>
</reference>
<feature type="chain" id="PRO_1000007064" description="Large ribosomal subunit protein bL12">
    <location>
        <begin position="1"/>
        <end position="123"/>
    </location>
</feature>
<sequence length="123" mass="12776">MSLTNEQIIEAIGQKSVMEIVELIKAMEETFGVTAAAAVAAGPAAGAAAAVEEQTEFNVVLAEAGDKKVNVIKAVRELTGLGLKEAKEKVDTAPQVIAEGLTKEAAEDAKKKLEEAGAKVELK</sequence>
<keyword id="KW-0687">Ribonucleoprotein</keyword>
<keyword id="KW-0689">Ribosomal protein</keyword>
<name>RL7_ECTM1</name>
<comment type="function">
    <text evidence="1">Forms part of the ribosomal stalk which helps the ribosome interact with GTP-bound translation factors. Is thus essential for accurate translation.</text>
</comment>
<comment type="subunit">
    <text evidence="1">Homodimer. Part of the ribosomal stalk of the 50S ribosomal subunit. Forms a multimeric L10(L12)X complex, where L10 forms an elongated spine to which 2 to 4 L12 dimers bind in a sequential fashion. Binds GTP-bound translation factors.</text>
</comment>
<comment type="similarity">
    <text evidence="1">Belongs to the bacterial ribosomal protein bL12 family.</text>
</comment>
<proteinExistence type="inferred from homology"/>
<accession>A4XZ98</accession>